<sequence>MLPFSMTGLEKDHTRGVLILANAHRRSERSRTASCAGPAVLFGGLITANIVAWAWAFALFADRPVVMATALLAWVFGLRHAVDADHIAAIDNVVRSLMQTGGTPRSAGLYFALGHSSVVVVATMLLALGVVSLGGDGLLKEIGSFIGASVSALFLLVIAAINLAIFASLWRTFRKAREQGIRDAAGLDALLAHRGILVRLLGPMFRLVTKPWHMYPLGFLFGLGFDTATEIGLLSISASEAARGASLADVMVFPALFAAGMALVDTADSTLMVSAYRWAFVDPMRKLWYNLTITGASVAVALFIGGIEALGLIGNRLDLSGGVWTLIDALNESLANVGLAVIALFAIAWLLSIVLYRRLIAGSSGLADTEVLECADATEAV</sequence>
<comment type="function">
    <text>Involved in nickel incorporation/metabolism into the hydrogenase apoprotein.</text>
</comment>
<comment type="subcellular location">
    <subcellularLocation>
        <location evidence="2">Cell inner membrane</location>
        <topology evidence="2">Multi-pass membrane protein</topology>
    </subcellularLocation>
</comment>
<comment type="similarity">
    <text evidence="2">Belongs to the NiCoT transporter (TC 2.A.52) family.</text>
</comment>
<reference key="1">
    <citation type="journal article" date="1994" name="Proc. Natl. Acad. Sci. U.S.A.">
        <title>Bacterial genes involved in incorporation of nickel into a hydrogenase enzyme.</title>
        <authorList>
            <person name="Fu C."/>
            <person name="Javedan S."/>
            <person name="Moshiri F."/>
            <person name="Maier R.J."/>
        </authorList>
    </citation>
    <scope>NUCLEOTIDE SEQUENCE [GENOMIC DNA]</scope>
    <source>
        <strain>JCM 10833 / BCRC 13528 / IAM 13628 / NBRC 14792 / USDA 110</strain>
    </source>
</reference>
<reference key="2">
    <citation type="journal article" date="2002" name="DNA Res.">
        <title>Complete genomic sequence of nitrogen-fixing symbiotic bacterium Bradyrhizobium japonicum USDA110.</title>
        <authorList>
            <person name="Kaneko T."/>
            <person name="Nakamura Y."/>
            <person name="Sato S."/>
            <person name="Minamisawa K."/>
            <person name="Uchiumi T."/>
            <person name="Sasamoto S."/>
            <person name="Watanabe A."/>
            <person name="Idesawa K."/>
            <person name="Iriguchi M."/>
            <person name="Kawashima K."/>
            <person name="Kohara M."/>
            <person name="Matsumoto M."/>
            <person name="Shimpo S."/>
            <person name="Tsuruoka H."/>
            <person name="Wada T."/>
            <person name="Yamada M."/>
            <person name="Tabata S."/>
        </authorList>
    </citation>
    <scope>NUCLEOTIDE SEQUENCE [LARGE SCALE GENOMIC DNA]</scope>
    <source>
        <strain>JCM 10833 / BCRC 13528 / IAM 13628 / NBRC 14792 / USDA 110</strain>
    </source>
</reference>
<evidence type="ECO:0000255" key="1"/>
<evidence type="ECO:0000305" key="2"/>
<gene>
    <name type="primary">hupN</name>
    <name type="ordered locus">bll6949</name>
</gene>
<protein>
    <recommendedName>
        <fullName>Hydrogenase nickel incorporation protein HupN</fullName>
    </recommendedName>
</protein>
<feature type="chain" id="PRO_0000194005" description="Hydrogenase nickel incorporation protein HupN">
    <location>
        <begin position="1"/>
        <end position="381"/>
    </location>
</feature>
<feature type="topological domain" description="Cytoplasmic" evidence="1">
    <location>
        <begin position="1"/>
        <end position="39"/>
    </location>
</feature>
<feature type="transmembrane region" description="Helical" evidence="1">
    <location>
        <begin position="40"/>
        <end position="60"/>
    </location>
</feature>
<feature type="topological domain" description="Periplasmic" evidence="1">
    <location>
        <begin position="61"/>
        <end position="63"/>
    </location>
</feature>
<feature type="transmembrane region" description="Helical" evidence="1">
    <location>
        <begin position="64"/>
        <end position="84"/>
    </location>
</feature>
<feature type="topological domain" description="Cytoplasmic" evidence="1">
    <location>
        <begin position="85"/>
        <end position="110"/>
    </location>
</feature>
<feature type="transmembrane region" description="Helical" evidence="1">
    <location>
        <begin position="111"/>
        <end position="131"/>
    </location>
</feature>
<feature type="topological domain" description="Periplasmic" evidence="1">
    <location>
        <begin position="132"/>
        <end position="149"/>
    </location>
</feature>
<feature type="transmembrane region" description="Helical" evidence="1">
    <location>
        <begin position="150"/>
        <end position="170"/>
    </location>
</feature>
<feature type="topological domain" description="Cytoplasmic" evidence="1">
    <location>
        <begin position="171"/>
        <end position="215"/>
    </location>
</feature>
<feature type="transmembrane region" description="Helical" evidence="1">
    <location>
        <begin position="216"/>
        <end position="236"/>
    </location>
</feature>
<feature type="topological domain" description="Periplasmic" evidence="1">
    <location>
        <begin position="237"/>
        <end position="243"/>
    </location>
</feature>
<feature type="transmembrane region" description="Helical" evidence="1">
    <location>
        <begin position="244"/>
        <end position="264"/>
    </location>
</feature>
<feature type="topological domain" description="Cytoplasmic" evidence="1">
    <location>
        <begin position="265"/>
        <end position="292"/>
    </location>
</feature>
<feature type="transmembrane region" description="Helical" evidence="1">
    <location>
        <begin position="293"/>
        <end position="313"/>
    </location>
</feature>
<feature type="topological domain" description="Periplasmic" evidence="1">
    <location>
        <begin position="314"/>
        <end position="333"/>
    </location>
</feature>
<feature type="transmembrane region" description="Helical" evidence="1">
    <location>
        <begin position="334"/>
        <end position="354"/>
    </location>
</feature>
<feature type="topological domain" description="Cytoplasmic" evidence="1">
    <location>
        <begin position="355"/>
        <end position="381"/>
    </location>
</feature>
<name>HUPN_BRADU</name>
<organism>
    <name type="scientific">Bradyrhizobium diazoefficiens (strain JCM 10833 / BCRC 13528 / IAM 13628 / NBRC 14792 / USDA 110)</name>
    <dbReference type="NCBI Taxonomy" id="224911"/>
    <lineage>
        <taxon>Bacteria</taxon>
        <taxon>Pseudomonadati</taxon>
        <taxon>Pseudomonadota</taxon>
        <taxon>Alphaproteobacteria</taxon>
        <taxon>Hyphomicrobiales</taxon>
        <taxon>Nitrobacteraceae</taxon>
        <taxon>Bradyrhizobium</taxon>
    </lineage>
</organism>
<dbReference type="EMBL" id="L24432">
    <property type="protein sequence ID" value="AAC36884.1"/>
    <property type="molecule type" value="Unassigned_DNA"/>
</dbReference>
<dbReference type="EMBL" id="BA000040">
    <property type="protein sequence ID" value="BAC52214.1"/>
    <property type="molecule type" value="Genomic_DNA"/>
</dbReference>
<dbReference type="RefSeq" id="NP_773589.1">
    <property type="nucleotide sequence ID" value="NC_004463.1"/>
</dbReference>
<dbReference type="RefSeq" id="WP_011089687.1">
    <property type="nucleotide sequence ID" value="NC_004463.1"/>
</dbReference>
<dbReference type="STRING" id="224911.AAV28_32335"/>
<dbReference type="TCDB" id="2.A.52.1.6">
    <property type="family name" value="the ni(2+)-co(2+) transporter (nicot) family"/>
</dbReference>
<dbReference type="EnsemblBacteria" id="BAC52214">
    <property type="protein sequence ID" value="BAC52214"/>
    <property type="gene ID" value="BAC52214"/>
</dbReference>
<dbReference type="GeneID" id="46493915"/>
<dbReference type="KEGG" id="bja:bll6949"/>
<dbReference type="PATRIC" id="fig|224911.5.peg.7120"/>
<dbReference type="eggNOG" id="COG3376">
    <property type="taxonomic scope" value="Bacteria"/>
</dbReference>
<dbReference type="HOGENOM" id="CLU_036094_2_0_5"/>
<dbReference type="InParanoid" id="Q45247"/>
<dbReference type="OrthoDB" id="9776706at2"/>
<dbReference type="PhylomeDB" id="Q45247"/>
<dbReference type="Proteomes" id="UP000002526">
    <property type="component" value="Chromosome"/>
</dbReference>
<dbReference type="GO" id="GO:0005886">
    <property type="term" value="C:plasma membrane"/>
    <property type="evidence" value="ECO:0007669"/>
    <property type="project" value="UniProtKB-SubCell"/>
</dbReference>
<dbReference type="GO" id="GO:0044750">
    <property type="term" value="F:high-affinity nickel cation transmembrane transporter activity"/>
    <property type="evidence" value="ECO:0000318"/>
    <property type="project" value="GO_Central"/>
</dbReference>
<dbReference type="GO" id="GO:0098716">
    <property type="term" value="P:nickel cation import across plasma membrane"/>
    <property type="evidence" value="ECO:0000318"/>
    <property type="project" value="GO_Central"/>
</dbReference>
<dbReference type="InterPro" id="IPR004688">
    <property type="entry name" value="Ni/Co_transpt"/>
</dbReference>
<dbReference type="InterPro" id="IPR011541">
    <property type="entry name" value="Ni/Co_transpt_high_affinity"/>
</dbReference>
<dbReference type="NCBIfam" id="TIGR00802">
    <property type="entry name" value="nico"/>
    <property type="match status" value="1"/>
</dbReference>
<dbReference type="PANTHER" id="PTHR31611">
    <property type="entry name" value="HIGH-AFFINITY NICKEL TRANSPORT PROTEIN NIC1"/>
    <property type="match status" value="1"/>
</dbReference>
<dbReference type="PANTHER" id="PTHR31611:SF0">
    <property type="entry name" value="HIGH-AFFINITY NICKEL TRANSPORT PROTEIN NIC1"/>
    <property type="match status" value="1"/>
</dbReference>
<dbReference type="Pfam" id="PF03824">
    <property type="entry name" value="NicO"/>
    <property type="match status" value="1"/>
</dbReference>
<keyword id="KW-0997">Cell inner membrane</keyword>
<keyword id="KW-1003">Cell membrane</keyword>
<keyword id="KW-0472">Membrane</keyword>
<keyword id="KW-0533">Nickel</keyword>
<keyword id="KW-1185">Reference proteome</keyword>
<keyword id="KW-0812">Transmembrane</keyword>
<keyword id="KW-1133">Transmembrane helix</keyword>
<keyword id="KW-0813">Transport</keyword>
<accession>Q45247</accession>
<proteinExistence type="inferred from homology"/>